<evidence type="ECO:0000255" key="1">
    <source>
        <dbReference type="HAMAP-Rule" id="MF_00087"/>
    </source>
</evidence>
<organism>
    <name type="scientific">Tropheryma whipplei (strain Twist)</name>
    <name type="common">Whipple's bacillus</name>
    <dbReference type="NCBI Taxonomy" id="203267"/>
    <lineage>
        <taxon>Bacteria</taxon>
        <taxon>Bacillati</taxon>
        <taxon>Actinomycetota</taxon>
        <taxon>Actinomycetes</taxon>
        <taxon>Micrococcales</taxon>
        <taxon>Tropherymataceae</taxon>
        <taxon>Tropheryma</taxon>
    </lineage>
</organism>
<reference key="1">
    <citation type="journal article" date="2003" name="Genome Res.">
        <title>Tropheryma whipplei twist: a human pathogenic Actinobacteria with a reduced genome.</title>
        <authorList>
            <person name="Raoult D."/>
            <person name="Ogata H."/>
            <person name="Audic S."/>
            <person name="Robert C."/>
            <person name="Suhre K."/>
            <person name="Drancourt M."/>
            <person name="Claverie J.-M."/>
        </authorList>
    </citation>
    <scope>NUCLEOTIDE SEQUENCE [LARGE SCALE GENOMIC DNA]</scope>
    <source>
        <strain>Twist</strain>
    </source>
</reference>
<proteinExistence type="inferred from homology"/>
<comment type="function">
    <text evidence="1">Catalyzes the NADPH-dependent reduction of glutamyl-tRNA(Glu) to glutamate 1-semialdehyde (GSA).</text>
</comment>
<comment type="catalytic activity">
    <reaction evidence="1">
        <text>(S)-4-amino-5-oxopentanoate + tRNA(Glu) + NADP(+) = L-glutamyl-tRNA(Glu) + NADPH + H(+)</text>
        <dbReference type="Rhea" id="RHEA:12344"/>
        <dbReference type="Rhea" id="RHEA-COMP:9663"/>
        <dbReference type="Rhea" id="RHEA-COMP:9680"/>
        <dbReference type="ChEBI" id="CHEBI:15378"/>
        <dbReference type="ChEBI" id="CHEBI:57501"/>
        <dbReference type="ChEBI" id="CHEBI:57783"/>
        <dbReference type="ChEBI" id="CHEBI:58349"/>
        <dbReference type="ChEBI" id="CHEBI:78442"/>
        <dbReference type="ChEBI" id="CHEBI:78520"/>
        <dbReference type="EC" id="1.2.1.70"/>
    </reaction>
</comment>
<comment type="pathway">
    <text evidence="1">Porphyrin-containing compound metabolism; protoporphyrin-IX biosynthesis; 5-aminolevulinate from L-glutamyl-tRNA(Glu): step 1/2.</text>
</comment>
<comment type="subunit">
    <text evidence="1">Homodimer.</text>
</comment>
<comment type="domain">
    <text evidence="1">Possesses an unusual extended V-shaped dimeric structure with each monomer consisting of three distinct domains arranged along a curved 'spinal' alpha-helix. The N-terminal catalytic domain specifically recognizes the glutamate moiety of the substrate. The second domain is the NADPH-binding domain, and the third C-terminal domain is responsible for dimerization.</text>
</comment>
<comment type="miscellaneous">
    <text evidence="1">During catalysis, the active site Cys acts as a nucleophile attacking the alpha-carbonyl group of tRNA-bound glutamate with the formation of a thioester intermediate between enzyme and glutamate, and the concomitant release of tRNA(Glu). The thioester intermediate is finally reduced by direct hydride transfer from NADPH, to form the product GSA.</text>
</comment>
<comment type="similarity">
    <text evidence="1">Belongs to the glutamyl-tRNA reductase family.</text>
</comment>
<dbReference type="EC" id="1.2.1.70" evidence="1"/>
<dbReference type="EMBL" id="AE014184">
    <property type="protein sequence ID" value="AAO44833.1"/>
    <property type="molecule type" value="Genomic_DNA"/>
</dbReference>
<dbReference type="RefSeq" id="WP_011096687.1">
    <property type="nucleotide sequence ID" value="NC_004572.3"/>
</dbReference>
<dbReference type="SMR" id="Q83FI9"/>
<dbReference type="STRING" id="203267.TWT_736"/>
<dbReference type="KEGG" id="twh:TWT_736"/>
<dbReference type="eggNOG" id="COG0373">
    <property type="taxonomic scope" value="Bacteria"/>
</dbReference>
<dbReference type="HOGENOM" id="CLU_035113_4_1_11"/>
<dbReference type="OrthoDB" id="110209at2"/>
<dbReference type="UniPathway" id="UPA00251">
    <property type="reaction ID" value="UER00316"/>
</dbReference>
<dbReference type="Proteomes" id="UP000002200">
    <property type="component" value="Chromosome"/>
</dbReference>
<dbReference type="GO" id="GO:0008883">
    <property type="term" value="F:glutamyl-tRNA reductase activity"/>
    <property type="evidence" value="ECO:0007669"/>
    <property type="project" value="UniProtKB-UniRule"/>
</dbReference>
<dbReference type="GO" id="GO:0050661">
    <property type="term" value="F:NADP binding"/>
    <property type="evidence" value="ECO:0007669"/>
    <property type="project" value="InterPro"/>
</dbReference>
<dbReference type="GO" id="GO:0019353">
    <property type="term" value="P:protoporphyrinogen IX biosynthetic process from glutamate"/>
    <property type="evidence" value="ECO:0007669"/>
    <property type="project" value="TreeGrafter"/>
</dbReference>
<dbReference type="Gene3D" id="3.30.460.30">
    <property type="entry name" value="Glutamyl-tRNA reductase, N-terminal domain"/>
    <property type="match status" value="1"/>
</dbReference>
<dbReference type="Gene3D" id="3.40.50.720">
    <property type="entry name" value="NAD(P)-binding Rossmann-like Domain"/>
    <property type="match status" value="1"/>
</dbReference>
<dbReference type="HAMAP" id="MF_00087">
    <property type="entry name" value="Glu_tRNA_reductase"/>
    <property type="match status" value="1"/>
</dbReference>
<dbReference type="InterPro" id="IPR000343">
    <property type="entry name" value="4pyrrol_synth_GluRdtase"/>
</dbReference>
<dbReference type="InterPro" id="IPR015896">
    <property type="entry name" value="4pyrrol_synth_GluRdtase_dimer"/>
</dbReference>
<dbReference type="InterPro" id="IPR015895">
    <property type="entry name" value="4pyrrol_synth_GluRdtase_N"/>
</dbReference>
<dbReference type="InterPro" id="IPR018214">
    <property type="entry name" value="GluRdtase_CS"/>
</dbReference>
<dbReference type="InterPro" id="IPR036453">
    <property type="entry name" value="GluRdtase_dimer_dom_sf"/>
</dbReference>
<dbReference type="InterPro" id="IPR036343">
    <property type="entry name" value="GluRdtase_N_sf"/>
</dbReference>
<dbReference type="InterPro" id="IPR036291">
    <property type="entry name" value="NAD(P)-bd_dom_sf"/>
</dbReference>
<dbReference type="InterPro" id="IPR006151">
    <property type="entry name" value="Shikm_DH/Glu-tRNA_Rdtase"/>
</dbReference>
<dbReference type="NCBIfam" id="NF000750">
    <property type="entry name" value="PRK00045.3-4"/>
    <property type="match status" value="1"/>
</dbReference>
<dbReference type="PANTHER" id="PTHR43013">
    <property type="entry name" value="GLUTAMYL-TRNA REDUCTASE"/>
    <property type="match status" value="1"/>
</dbReference>
<dbReference type="PANTHER" id="PTHR43013:SF1">
    <property type="entry name" value="GLUTAMYL-TRNA REDUCTASE"/>
    <property type="match status" value="1"/>
</dbReference>
<dbReference type="Pfam" id="PF00745">
    <property type="entry name" value="GlutR_dimer"/>
    <property type="match status" value="1"/>
</dbReference>
<dbReference type="Pfam" id="PF05201">
    <property type="entry name" value="GlutR_N"/>
    <property type="match status" value="1"/>
</dbReference>
<dbReference type="Pfam" id="PF01488">
    <property type="entry name" value="Shikimate_DH"/>
    <property type="match status" value="1"/>
</dbReference>
<dbReference type="PIRSF" id="PIRSF000445">
    <property type="entry name" value="4pyrrol_synth_GluRdtase"/>
    <property type="match status" value="1"/>
</dbReference>
<dbReference type="SUPFAM" id="SSF69742">
    <property type="entry name" value="Glutamyl tRNA-reductase catalytic, N-terminal domain"/>
    <property type="match status" value="1"/>
</dbReference>
<dbReference type="SUPFAM" id="SSF69075">
    <property type="entry name" value="Glutamyl tRNA-reductase dimerization domain"/>
    <property type="match status" value="1"/>
</dbReference>
<dbReference type="SUPFAM" id="SSF51735">
    <property type="entry name" value="NAD(P)-binding Rossmann-fold domains"/>
    <property type="match status" value="1"/>
</dbReference>
<dbReference type="PROSITE" id="PS00747">
    <property type="entry name" value="GLUTR"/>
    <property type="match status" value="1"/>
</dbReference>
<keyword id="KW-0521">NADP</keyword>
<keyword id="KW-0560">Oxidoreductase</keyword>
<keyword id="KW-0627">Porphyrin biosynthesis</keyword>
<keyword id="KW-1185">Reference proteome</keyword>
<name>HEM1_TROWT</name>
<accession>Q83FI9</accession>
<feature type="chain" id="PRO_0000114082" description="Glutamyl-tRNA reductase">
    <location>
        <begin position="1"/>
        <end position="447"/>
    </location>
</feature>
<feature type="active site" description="Nucleophile" evidence="1">
    <location>
        <position position="46"/>
    </location>
</feature>
<feature type="binding site" evidence="1">
    <location>
        <begin position="45"/>
        <end position="48"/>
    </location>
    <ligand>
        <name>substrate</name>
    </ligand>
</feature>
<feature type="binding site" evidence="1">
    <location>
        <position position="111"/>
    </location>
    <ligand>
        <name>substrate</name>
    </ligand>
</feature>
<feature type="binding site" evidence="1">
    <location>
        <begin position="116"/>
        <end position="118"/>
    </location>
    <ligand>
        <name>substrate</name>
    </ligand>
</feature>
<feature type="binding site" evidence="1">
    <location>
        <position position="122"/>
    </location>
    <ligand>
        <name>substrate</name>
    </ligand>
</feature>
<feature type="binding site" evidence="1">
    <location>
        <begin position="191"/>
        <end position="196"/>
    </location>
    <ligand>
        <name>NADP(+)</name>
        <dbReference type="ChEBI" id="CHEBI:58349"/>
    </ligand>
</feature>
<feature type="site" description="Important for activity" evidence="1">
    <location>
        <position position="101"/>
    </location>
</feature>
<gene>
    <name evidence="1" type="primary">hemA</name>
    <name type="ordered locus">TWT_736</name>
</gene>
<sequence>MLLCVSANHKKTSFTVLEQLARVSPDFASELVEAEDIDGAAILSTCNRFEVYIDAIQKGDQDDVCKTGLLVQNRIGELCNISPSTIIEQTSFLAGCEVSRHLFSVATGLESMIIGETEIAGQVKRALTYAQKCRTTSPELERLFQRASAVNRHIRQSTKINEVGQSLVSLSLDLASSRIGDWSGVRAIIVGTGKYASKALALLKERGVVDISVYSPSGHVNNICNTEGVRNIFNLQTALSGCDLVVGCSSVDKPVITKQDIETAQASGSRTSRVRPVGRPSTDLTAIEASNRSRHVLIDLGLPRNFDPAISDLPTADLIDLDMLRVHAPFDNLAAEKMAHELAIESSSQFVNDCKQHEATPVIVSFRNYLESLTQTSLRRTDNCKHAQHALKHFVNSLIHIPLTRCKQLAANGESHKFAESMEILFDVKTDCTEGTQYQSSCGKSFD</sequence>
<protein>
    <recommendedName>
        <fullName evidence="1">Glutamyl-tRNA reductase</fullName>
        <shortName evidence="1">GluTR</shortName>
        <ecNumber evidence="1">1.2.1.70</ecNumber>
    </recommendedName>
</protein>